<name>COBQ_NITV2</name>
<proteinExistence type="inferred from homology"/>
<feature type="chain" id="PRO_0000141302" description="Cobyric acid synthase">
    <location>
        <begin position="1"/>
        <end position="543"/>
    </location>
</feature>
<feature type="domain" description="GATase cobBQ-type" evidence="1">
    <location>
        <begin position="260"/>
        <end position="483"/>
    </location>
</feature>
<feature type="active site" description="Nucleophile" evidence="1">
    <location>
        <position position="346"/>
    </location>
</feature>
<feature type="active site" evidence="1">
    <location>
        <position position="475"/>
    </location>
</feature>
<sequence>MKSPTPALMLQGTSSNAGKSILTAAFCRILLQDGYRVAPFKAQNMALNSHVTADGLELGRAQAVQAAACRLDVDVRMNPVLLKPNSDTGSQVVVMGRPVGNMRVREYMAYKPVAFDAARAAYDSLAADVDVMVLEGAGSPAEVNLKAHDIVNMAMARHAEAKVLLVGDIDRGGVFASLVGTMELLDPWERDLVAGFVLNKFRGDATLLSPAYDVVTGRTGKPFLGVVPWLHDLGLPDEDSVSFRETLAGRAPDVPAGGGMLDIVLVDLPHISNFTDLDALRREPDVAVRVVRSPEQLGSPDAIILPGSKNTLGDLAALRSRGMAEALCALRSAEGGHLGPVIVGICGGFQMMGRFLADPQGVESDHACTEAGLGLLPVTTEMGSAKVLRRTSAKTVSGWCGAGVAAGLMPGTGGGHGGAEVCPGEGYAVHGYEIHHGVTTPDAGGGAVLVCLHESDGSPAGWTTPDGQVWGTYLHGVFDADGFRRGWLDALRVRRGLEPVGRVVARYDLDPALDRLADVVREAVDMGHIYSVLGLSPKGRRQT</sequence>
<reference key="1">
    <citation type="journal article" date="2004" name="Nat. Biotechnol.">
        <title>The genome sequence of the anaerobic, sulfate-reducing bacterium Desulfovibrio vulgaris Hildenborough.</title>
        <authorList>
            <person name="Heidelberg J.F."/>
            <person name="Seshadri R."/>
            <person name="Haveman S.A."/>
            <person name="Hemme C.L."/>
            <person name="Paulsen I.T."/>
            <person name="Kolonay J.F."/>
            <person name="Eisen J.A."/>
            <person name="Ward N.L."/>
            <person name="Methe B.A."/>
            <person name="Brinkac L.M."/>
            <person name="Daugherty S.C."/>
            <person name="DeBoy R.T."/>
            <person name="Dodson R.J."/>
            <person name="Durkin A.S."/>
            <person name="Madupu R."/>
            <person name="Nelson W.C."/>
            <person name="Sullivan S.A."/>
            <person name="Fouts D.E."/>
            <person name="Haft D.H."/>
            <person name="Selengut J."/>
            <person name="Peterson J.D."/>
            <person name="Davidsen T.M."/>
            <person name="Zafar N."/>
            <person name="Zhou L."/>
            <person name="Radune D."/>
            <person name="Dimitrov G."/>
            <person name="Hance M."/>
            <person name="Tran K."/>
            <person name="Khouri H.M."/>
            <person name="Gill J."/>
            <person name="Utterback T.R."/>
            <person name="Feldblyum T.V."/>
            <person name="Wall J.D."/>
            <person name="Voordouw G."/>
            <person name="Fraser C.M."/>
        </authorList>
    </citation>
    <scope>NUCLEOTIDE SEQUENCE [LARGE SCALE GENOMIC DNA]</scope>
    <source>
        <strain>ATCC 29579 / DSM 644 / CCUG 34227 / NCIMB 8303 / VKM B-1760 / Hildenborough</strain>
    </source>
</reference>
<evidence type="ECO:0000255" key="1">
    <source>
        <dbReference type="HAMAP-Rule" id="MF_00028"/>
    </source>
</evidence>
<organism>
    <name type="scientific">Nitratidesulfovibrio vulgaris (strain ATCC 29579 / DSM 644 / CCUG 34227 / NCIMB 8303 / VKM B-1760 / Hildenborough)</name>
    <name type="common">Desulfovibrio vulgaris</name>
    <dbReference type="NCBI Taxonomy" id="882"/>
    <lineage>
        <taxon>Bacteria</taxon>
        <taxon>Pseudomonadati</taxon>
        <taxon>Thermodesulfobacteriota</taxon>
        <taxon>Desulfovibrionia</taxon>
        <taxon>Desulfovibrionales</taxon>
        <taxon>Desulfovibrionaceae</taxon>
        <taxon>Nitratidesulfovibrio</taxon>
    </lineage>
</organism>
<protein>
    <recommendedName>
        <fullName evidence="1">Cobyric acid synthase</fullName>
    </recommendedName>
</protein>
<comment type="function">
    <text evidence="1">Catalyzes amidations at positions B, D, E, and G on adenosylcobyrinic A,C-diamide. NH(2) groups are provided by glutamine, and one molecule of ATP is hydrogenolyzed for each amidation.</text>
</comment>
<comment type="pathway">
    <text evidence="1">Cofactor biosynthesis; adenosylcobalamin biosynthesis.</text>
</comment>
<comment type="similarity">
    <text evidence="1">Belongs to the CobB/CobQ family. CobQ subfamily.</text>
</comment>
<accession>Q72DW3</accession>
<gene>
    <name evidence="1" type="primary">cobQ</name>
    <name type="ordered locus">DVU_0816</name>
</gene>
<dbReference type="EMBL" id="AE017285">
    <property type="protein sequence ID" value="AAS95296.1"/>
    <property type="molecule type" value="Genomic_DNA"/>
</dbReference>
<dbReference type="RefSeq" id="WP_010938117.1">
    <property type="nucleotide sequence ID" value="NC_002937.3"/>
</dbReference>
<dbReference type="RefSeq" id="YP_010037.1">
    <property type="nucleotide sequence ID" value="NC_002937.3"/>
</dbReference>
<dbReference type="STRING" id="882.DVU_0816"/>
<dbReference type="PaxDb" id="882-DVU_0816"/>
<dbReference type="EnsemblBacteria" id="AAS95296">
    <property type="protein sequence ID" value="AAS95296"/>
    <property type="gene ID" value="DVU_0816"/>
</dbReference>
<dbReference type="KEGG" id="dvu:DVU_0816"/>
<dbReference type="PATRIC" id="fig|882.5.peg.766"/>
<dbReference type="eggNOG" id="COG1492">
    <property type="taxonomic scope" value="Bacteria"/>
</dbReference>
<dbReference type="HOGENOM" id="CLU_019250_2_2_7"/>
<dbReference type="OrthoDB" id="9808302at2"/>
<dbReference type="PhylomeDB" id="Q72DW3"/>
<dbReference type="UniPathway" id="UPA00148"/>
<dbReference type="Proteomes" id="UP000002194">
    <property type="component" value="Chromosome"/>
</dbReference>
<dbReference type="GO" id="GO:0015420">
    <property type="term" value="F:ABC-type vitamin B12 transporter activity"/>
    <property type="evidence" value="ECO:0007669"/>
    <property type="project" value="UniProtKB-UniRule"/>
</dbReference>
<dbReference type="GO" id="GO:0003824">
    <property type="term" value="F:catalytic activity"/>
    <property type="evidence" value="ECO:0007669"/>
    <property type="project" value="InterPro"/>
</dbReference>
<dbReference type="GO" id="GO:0009236">
    <property type="term" value="P:cobalamin biosynthetic process"/>
    <property type="evidence" value="ECO:0007669"/>
    <property type="project" value="UniProtKB-UniRule"/>
</dbReference>
<dbReference type="CDD" id="cd05389">
    <property type="entry name" value="CobQ_N"/>
    <property type="match status" value="1"/>
</dbReference>
<dbReference type="CDD" id="cd01750">
    <property type="entry name" value="GATase1_CobQ"/>
    <property type="match status" value="1"/>
</dbReference>
<dbReference type="Gene3D" id="3.40.50.880">
    <property type="match status" value="1"/>
</dbReference>
<dbReference type="Gene3D" id="3.40.50.300">
    <property type="entry name" value="P-loop containing nucleotide triphosphate hydrolases"/>
    <property type="match status" value="1"/>
</dbReference>
<dbReference type="HAMAP" id="MF_00028">
    <property type="entry name" value="CobQ"/>
    <property type="match status" value="1"/>
</dbReference>
<dbReference type="InterPro" id="IPR029062">
    <property type="entry name" value="Class_I_gatase-like"/>
</dbReference>
<dbReference type="InterPro" id="IPR002586">
    <property type="entry name" value="CobQ/CobB/MinD/ParA_Nub-bd_dom"/>
</dbReference>
<dbReference type="InterPro" id="IPR033949">
    <property type="entry name" value="CobQ_GATase1"/>
</dbReference>
<dbReference type="InterPro" id="IPR047045">
    <property type="entry name" value="CobQ_N"/>
</dbReference>
<dbReference type="InterPro" id="IPR004459">
    <property type="entry name" value="CobQ_synth"/>
</dbReference>
<dbReference type="InterPro" id="IPR011698">
    <property type="entry name" value="GATase_3"/>
</dbReference>
<dbReference type="InterPro" id="IPR027417">
    <property type="entry name" value="P-loop_NTPase"/>
</dbReference>
<dbReference type="NCBIfam" id="TIGR00313">
    <property type="entry name" value="cobQ"/>
    <property type="match status" value="1"/>
</dbReference>
<dbReference type="NCBIfam" id="NF001989">
    <property type="entry name" value="PRK00784.1"/>
    <property type="match status" value="1"/>
</dbReference>
<dbReference type="PANTHER" id="PTHR21343:SF1">
    <property type="entry name" value="COBYRIC ACID SYNTHASE"/>
    <property type="match status" value="1"/>
</dbReference>
<dbReference type="PANTHER" id="PTHR21343">
    <property type="entry name" value="DETHIOBIOTIN SYNTHETASE"/>
    <property type="match status" value="1"/>
</dbReference>
<dbReference type="Pfam" id="PF01656">
    <property type="entry name" value="CbiA"/>
    <property type="match status" value="1"/>
</dbReference>
<dbReference type="Pfam" id="PF07685">
    <property type="entry name" value="GATase_3"/>
    <property type="match status" value="1"/>
</dbReference>
<dbReference type="SUPFAM" id="SSF52317">
    <property type="entry name" value="Class I glutamine amidotransferase-like"/>
    <property type="match status" value="1"/>
</dbReference>
<dbReference type="SUPFAM" id="SSF52540">
    <property type="entry name" value="P-loop containing nucleoside triphosphate hydrolases"/>
    <property type="match status" value="1"/>
</dbReference>
<dbReference type="PROSITE" id="PS51274">
    <property type="entry name" value="GATASE_COBBQ"/>
    <property type="match status" value="1"/>
</dbReference>
<keyword id="KW-0169">Cobalamin biosynthesis</keyword>
<keyword id="KW-0315">Glutamine amidotransferase</keyword>
<keyword id="KW-1185">Reference proteome</keyword>